<feature type="chain" id="PRO_0000198505" description="Ribonuclease P protein component">
    <location>
        <begin position="1"/>
        <end position="118"/>
    </location>
</feature>
<dbReference type="EC" id="3.1.26.5" evidence="1"/>
<dbReference type="EMBL" id="CR378663">
    <property type="protein sequence ID" value="CAG18459.1"/>
    <property type="molecule type" value="Genomic_DNA"/>
</dbReference>
<dbReference type="RefSeq" id="WP_011216840.1">
    <property type="nucleotide sequence ID" value="NC_006370.1"/>
</dbReference>
<dbReference type="SMR" id="Q6LW54"/>
<dbReference type="STRING" id="298386.PBPRA0004"/>
<dbReference type="KEGG" id="ppr:PBPRA0004"/>
<dbReference type="eggNOG" id="COG0594">
    <property type="taxonomic scope" value="Bacteria"/>
</dbReference>
<dbReference type="HOGENOM" id="CLU_117179_11_0_6"/>
<dbReference type="Proteomes" id="UP000000593">
    <property type="component" value="Chromosome 1"/>
</dbReference>
<dbReference type="GO" id="GO:0030677">
    <property type="term" value="C:ribonuclease P complex"/>
    <property type="evidence" value="ECO:0007669"/>
    <property type="project" value="TreeGrafter"/>
</dbReference>
<dbReference type="GO" id="GO:0042781">
    <property type="term" value="F:3'-tRNA processing endoribonuclease activity"/>
    <property type="evidence" value="ECO:0007669"/>
    <property type="project" value="TreeGrafter"/>
</dbReference>
<dbReference type="GO" id="GO:0004526">
    <property type="term" value="F:ribonuclease P activity"/>
    <property type="evidence" value="ECO:0007669"/>
    <property type="project" value="UniProtKB-UniRule"/>
</dbReference>
<dbReference type="GO" id="GO:0000049">
    <property type="term" value="F:tRNA binding"/>
    <property type="evidence" value="ECO:0007669"/>
    <property type="project" value="UniProtKB-UniRule"/>
</dbReference>
<dbReference type="GO" id="GO:0001682">
    <property type="term" value="P:tRNA 5'-leader removal"/>
    <property type="evidence" value="ECO:0007669"/>
    <property type="project" value="UniProtKB-UniRule"/>
</dbReference>
<dbReference type="Gene3D" id="3.30.230.10">
    <property type="match status" value="1"/>
</dbReference>
<dbReference type="HAMAP" id="MF_00227">
    <property type="entry name" value="RNase_P"/>
    <property type="match status" value="1"/>
</dbReference>
<dbReference type="InterPro" id="IPR020568">
    <property type="entry name" value="Ribosomal_Su5_D2-typ_SF"/>
</dbReference>
<dbReference type="InterPro" id="IPR014721">
    <property type="entry name" value="Ribsml_uS5_D2-typ_fold_subgr"/>
</dbReference>
<dbReference type="InterPro" id="IPR000100">
    <property type="entry name" value="RNase_P"/>
</dbReference>
<dbReference type="NCBIfam" id="TIGR00188">
    <property type="entry name" value="rnpA"/>
    <property type="match status" value="1"/>
</dbReference>
<dbReference type="PANTHER" id="PTHR33992">
    <property type="entry name" value="RIBONUCLEASE P PROTEIN COMPONENT"/>
    <property type="match status" value="1"/>
</dbReference>
<dbReference type="PANTHER" id="PTHR33992:SF1">
    <property type="entry name" value="RIBONUCLEASE P PROTEIN COMPONENT"/>
    <property type="match status" value="1"/>
</dbReference>
<dbReference type="Pfam" id="PF00825">
    <property type="entry name" value="Ribonuclease_P"/>
    <property type="match status" value="1"/>
</dbReference>
<dbReference type="SUPFAM" id="SSF54211">
    <property type="entry name" value="Ribosomal protein S5 domain 2-like"/>
    <property type="match status" value="1"/>
</dbReference>
<protein>
    <recommendedName>
        <fullName evidence="1">Ribonuclease P protein component</fullName>
        <shortName evidence="1">RNase P protein</shortName>
        <shortName evidence="1">RNaseP protein</shortName>
        <ecNumber evidence="1">3.1.26.5</ecNumber>
    </recommendedName>
    <alternativeName>
        <fullName evidence="1">Protein C5</fullName>
    </alternativeName>
</protein>
<comment type="function">
    <text evidence="1">RNaseP catalyzes the removal of the 5'-leader sequence from pre-tRNA to produce the mature 5'-terminus. It can also cleave other RNA substrates such as 4.5S RNA. The protein component plays an auxiliary but essential role in vivo by binding to the 5'-leader sequence and broadening the substrate specificity of the ribozyme.</text>
</comment>
<comment type="catalytic activity">
    <reaction evidence="1">
        <text>Endonucleolytic cleavage of RNA, removing 5'-extranucleotides from tRNA precursor.</text>
        <dbReference type="EC" id="3.1.26.5"/>
    </reaction>
</comment>
<comment type="subunit">
    <text evidence="1">Consists of a catalytic RNA component (M1 or rnpB) and a protein subunit.</text>
</comment>
<comment type="similarity">
    <text evidence="1">Belongs to the RnpA family.</text>
</comment>
<reference key="1">
    <citation type="journal article" date="2005" name="Science">
        <title>Life at depth: Photobacterium profundum genome sequence and expression analysis.</title>
        <authorList>
            <person name="Vezzi A."/>
            <person name="Campanaro S."/>
            <person name="D'Angelo M."/>
            <person name="Simonato F."/>
            <person name="Vitulo N."/>
            <person name="Lauro F.M."/>
            <person name="Cestaro A."/>
            <person name="Malacrida G."/>
            <person name="Simionati B."/>
            <person name="Cannata N."/>
            <person name="Romualdi C."/>
            <person name="Bartlett D.H."/>
            <person name="Valle G."/>
        </authorList>
    </citation>
    <scope>NUCLEOTIDE SEQUENCE [LARGE SCALE GENOMIC DNA]</scope>
    <source>
        <strain>ATCC BAA-1253 / SS9</strain>
    </source>
</reference>
<sequence>MNKLAFSRELRLLTPEHYKKVFQQAHRAGSPHLTILARPNDLNHPRLGLAVPKKQIKTAPGRNHFKRIVRESFRLKQHDLPANDFVVIAKKSASELSNEELFKLLDKLWHRLSRLSRG</sequence>
<proteinExistence type="inferred from homology"/>
<keyword id="KW-0255">Endonuclease</keyword>
<keyword id="KW-0378">Hydrolase</keyword>
<keyword id="KW-0540">Nuclease</keyword>
<keyword id="KW-1185">Reference proteome</keyword>
<keyword id="KW-0694">RNA-binding</keyword>
<keyword id="KW-0819">tRNA processing</keyword>
<gene>
    <name evidence="1" type="primary">rnpA</name>
    <name type="ordered locus">PBPRA0004</name>
</gene>
<organism>
    <name type="scientific">Photobacterium profundum (strain SS9)</name>
    <dbReference type="NCBI Taxonomy" id="298386"/>
    <lineage>
        <taxon>Bacteria</taxon>
        <taxon>Pseudomonadati</taxon>
        <taxon>Pseudomonadota</taxon>
        <taxon>Gammaproteobacteria</taxon>
        <taxon>Vibrionales</taxon>
        <taxon>Vibrionaceae</taxon>
        <taxon>Photobacterium</taxon>
    </lineage>
</organism>
<accession>Q6LW54</accession>
<evidence type="ECO:0000255" key="1">
    <source>
        <dbReference type="HAMAP-Rule" id="MF_00227"/>
    </source>
</evidence>
<name>RNPA_PHOPR</name>